<dbReference type="EMBL" id="CP000026">
    <property type="protein sequence ID" value="AAV79794.1"/>
    <property type="molecule type" value="Genomic_DNA"/>
</dbReference>
<dbReference type="RefSeq" id="WP_000973684.1">
    <property type="nucleotide sequence ID" value="NC_006511.1"/>
</dbReference>
<dbReference type="SMR" id="Q5PKZ7"/>
<dbReference type="KEGG" id="spt:SPA4048"/>
<dbReference type="HOGENOM" id="CLU_032473_4_1_6"/>
<dbReference type="Proteomes" id="UP000008185">
    <property type="component" value="Chromosome"/>
</dbReference>
<dbReference type="GO" id="GO:0009279">
    <property type="term" value="C:cell outer membrane"/>
    <property type="evidence" value="ECO:0007669"/>
    <property type="project" value="UniProtKB-SubCell"/>
</dbReference>
<dbReference type="GO" id="GO:0046930">
    <property type="term" value="C:pore complex"/>
    <property type="evidence" value="ECO:0007669"/>
    <property type="project" value="UniProtKB-KW"/>
</dbReference>
<dbReference type="GO" id="GO:0042958">
    <property type="term" value="F:maltodextrin transmembrane transporter activity"/>
    <property type="evidence" value="ECO:0007669"/>
    <property type="project" value="InterPro"/>
</dbReference>
<dbReference type="GO" id="GO:0015481">
    <property type="term" value="F:maltose transporting porin activity"/>
    <property type="evidence" value="ECO:0007669"/>
    <property type="project" value="InterPro"/>
</dbReference>
<dbReference type="GO" id="GO:0006811">
    <property type="term" value="P:monoatomic ion transport"/>
    <property type="evidence" value="ECO:0007669"/>
    <property type="project" value="UniProtKB-KW"/>
</dbReference>
<dbReference type="CDD" id="cd01346">
    <property type="entry name" value="Maltoporin-like"/>
    <property type="match status" value="1"/>
</dbReference>
<dbReference type="FunFam" id="2.40.170.10:FF:000001">
    <property type="entry name" value="Maltoporin"/>
    <property type="match status" value="1"/>
</dbReference>
<dbReference type="Gene3D" id="2.40.170.10">
    <property type="entry name" value="Porin, LamB type"/>
    <property type="match status" value="1"/>
</dbReference>
<dbReference type="HAMAP" id="MF_01301">
    <property type="entry name" value="LamB"/>
    <property type="match status" value="1"/>
</dbReference>
<dbReference type="InterPro" id="IPR050286">
    <property type="entry name" value="G_neg_Bact_CarbUptk_Porin"/>
</dbReference>
<dbReference type="InterPro" id="IPR023738">
    <property type="entry name" value="Maltoporin"/>
</dbReference>
<dbReference type="InterPro" id="IPR003192">
    <property type="entry name" value="Porin_LamB"/>
</dbReference>
<dbReference type="InterPro" id="IPR036998">
    <property type="entry name" value="Porin_LamB_sf"/>
</dbReference>
<dbReference type="NCBIfam" id="NF006860">
    <property type="entry name" value="PRK09360.1"/>
    <property type="match status" value="1"/>
</dbReference>
<dbReference type="PANTHER" id="PTHR38762">
    <property type="entry name" value="CRYPTIC OUTER MEMBRANE PORIN BGLH-RELATED"/>
    <property type="match status" value="1"/>
</dbReference>
<dbReference type="PANTHER" id="PTHR38762:SF1">
    <property type="entry name" value="CRYPTIC OUTER MEMBRANE PORIN BGLH-RELATED"/>
    <property type="match status" value="1"/>
</dbReference>
<dbReference type="Pfam" id="PF02264">
    <property type="entry name" value="LamB"/>
    <property type="match status" value="1"/>
</dbReference>
<dbReference type="SUPFAM" id="SSF56935">
    <property type="entry name" value="Porins"/>
    <property type="match status" value="1"/>
</dbReference>
<name>LAMB_SALPA</name>
<gene>
    <name evidence="1" type="primary">lamB</name>
    <name type="ordered locus">SPA4048</name>
</gene>
<reference key="1">
    <citation type="journal article" date="2004" name="Nat. Genet.">
        <title>Comparison of genome degradation in Paratyphi A and Typhi, human-restricted serovars of Salmonella enterica that cause typhoid.</title>
        <authorList>
            <person name="McClelland M."/>
            <person name="Sanderson K.E."/>
            <person name="Clifton S.W."/>
            <person name="Latreille P."/>
            <person name="Porwollik S."/>
            <person name="Sabo A."/>
            <person name="Meyer R."/>
            <person name="Bieri T."/>
            <person name="Ozersky P."/>
            <person name="McLellan M."/>
            <person name="Harkins C.R."/>
            <person name="Wang C."/>
            <person name="Nguyen C."/>
            <person name="Berghoff A."/>
            <person name="Elliott G."/>
            <person name="Kohlberg S."/>
            <person name="Strong C."/>
            <person name="Du F."/>
            <person name="Carter J."/>
            <person name="Kremizki C."/>
            <person name="Layman D."/>
            <person name="Leonard S."/>
            <person name="Sun H."/>
            <person name="Fulton L."/>
            <person name="Nash W."/>
            <person name="Miner T."/>
            <person name="Minx P."/>
            <person name="Delehaunty K."/>
            <person name="Fronick C."/>
            <person name="Magrini V."/>
            <person name="Nhan M."/>
            <person name="Warren W."/>
            <person name="Florea L."/>
            <person name="Spieth J."/>
            <person name="Wilson R.K."/>
        </authorList>
    </citation>
    <scope>NUCLEOTIDE SEQUENCE [LARGE SCALE GENOMIC DNA]</scope>
    <source>
        <strain>ATCC 9150 / SARB42</strain>
    </source>
</reference>
<comment type="function">
    <text evidence="1">Involved in the transport of maltose and maltodextrins.</text>
</comment>
<comment type="catalytic activity">
    <reaction evidence="1">
        <text>beta-maltose(in) = beta-maltose(out)</text>
        <dbReference type="Rhea" id="RHEA:29731"/>
        <dbReference type="ChEBI" id="CHEBI:18147"/>
    </reaction>
</comment>
<comment type="subunit">
    <text evidence="1">Homotrimer formed of three 18-stranded antiparallel beta-barrels, containing three independent channels.</text>
</comment>
<comment type="subcellular location">
    <subcellularLocation>
        <location evidence="1">Cell outer membrane</location>
        <topology evidence="1">Multi-pass membrane protein</topology>
    </subcellularLocation>
</comment>
<comment type="induction">
    <text evidence="1">By maltose.</text>
</comment>
<comment type="similarity">
    <text evidence="1">Belongs to the porin LamB (TC 1.B.3) family.</text>
</comment>
<evidence type="ECO:0000255" key="1">
    <source>
        <dbReference type="HAMAP-Rule" id="MF_01301"/>
    </source>
</evidence>
<accession>Q5PKZ7</accession>
<keyword id="KW-0998">Cell outer membrane</keyword>
<keyword id="KW-0406">Ion transport</keyword>
<keyword id="KW-0472">Membrane</keyword>
<keyword id="KW-0626">Porin</keyword>
<keyword id="KW-0732">Signal</keyword>
<keyword id="KW-0762">Sugar transport</keyword>
<keyword id="KW-0812">Transmembrane</keyword>
<keyword id="KW-1134">Transmembrane beta strand</keyword>
<keyword id="KW-0813">Transport</keyword>
<protein>
    <recommendedName>
        <fullName evidence="1">Maltoporin</fullName>
    </recommendedName>
    <alternativeName>
        <fullName evidence="1">Maltose-inducible porin</fullName>
    </alternativeName>
</protein>
<proteinExistence type="inferred from homology"/>
<feature type="signal peptide" evidence="1">
    <location>
        <begin position="1"/>
        <end position="25"/>
    </location>
</feature>
<feature type="chain" id="PRO_0000228856" description="Maltoporin">
    <location>
        <begin position="26"/>
        <end position="452"/>
    </location>
</feature>
<feature type="site" description="Greasy slide, important in sugar transport" evidence="1">
    <location>
        <position position="31"/>
    </location>
</feature>
<feature type="site" description="Greasy slide, important in sugar transport" evidence="1">
    <location>
        <position position="66"/>
    </location>
</feature>
<feature type="site" description="Greasy slide, important in sugar transport" evidence="1">
    <location>
        <position position="99"/>
    </location>
</feature>
<feature type="site" description="Important in sugar transport" evidence="1">
    <location>
        <position position="143"/>
    </location>
</feature>
<feature type="site" description="Greasy slide, important in sugar transport" evidence="1">
    <location>
        <position position="252"/>
    </location>
</feature>
<feature type="site" description="Greasy slide, important in sugar transport" evidence="1">
    <location>
        <position position="393"/>
    </location>
</feature>
<feature type="site" description="Greasy slide, important in sugar transport" evidence="1">
    <location>
        <position position="451"/>
    </location>
</feature>
<organism>
    <name type="scientific">Salmonella paratyphi A (strain ATCC 9150 / SARB42)</name>
    <dbReference type="NCBI Taxonomy" id="295319"/>
    <lineage>
        <taxon>Bacteria</taxon>
        <taxon>Pseudomonadati</taxon>
        <taxon>Pseudomonadota</taxon>
        <taxon>Gammaproteobacteria</taxon>
        <taxon>Enterobacterales</taxon>
        <taxon>Enterobacteriaceae</taxon>
        <taxon>Salmonella</taxon>
    </lineage>
</organism>
<sequence>MMITLRKLPLAVAVAAGVMSAQAMAVDFHGYARSGIGWTGSGGEQQCFQVTGAQSKYRLGNECETYAELKLGQEVWKEGDKSFYFDTNVAYSVNQQNDWESTDPAFREANVQGKNLIEWLPGSTIWAGKRFYQRHDVHMIDFYYWDISGPGAGIENIDLGFGKLSLAATRSTEAGGSYTFSSQNIYDEVKDTANDVFDVRLAGLQTNPDGVLELGVDYGRANTTDGYKLVDGASKDGWMFTAEHTQSMLKGYNKFVVQYATDAMTTQGKGQARGSDGSSSFTEELPDGTKINYANKVINNNGDMWRILDHGAISLGDKWGLMYVGMYQNIDWDNNLGTEWWTVGVRPMYKWTPIMSTLLEVGYDNVKSQQTGDRNNQYKITLAQQWQAGDSIWSRPAIRIFATYAKWDEKWGYIKDGDNISRYAAATNSGISTNSRGDSDEWTFGAQMEIWW</sequence>